<comment type="function">
    <text evidence="1">Required for the formation of a threonylcarbamoyl group on adenosine at position 37 (t(6)A37) in tRNAs that read codons beginning with adenine. Catalyzes the conversion of L-threonine, HCO(3)(-)/CO(2) and ATP to give threonylcarbamoyl-AMP (TC-AMP) as the acyladenylate intermediate, with the release of diphosphate.</text>
</comment>
<comment type="catalytic activity">
    <reaction evidence="1">
        <text>L-threonine + hydrogencarbonate + ATP = L-threonylcarbamoyladenylate + diphosphate + H2O</text>
        <dbReference type="Rhea" id="RHEA:36407"/>
        <dbReference type="ChEBI" id="CHEBI:15377"/>
        <dbReference type="ChEBI" id="CHEBI:17544"/>
        <dbReference type="ChEBI" id="CHEBI:30616"/>
        <dbReference type="ChEBI" id="CHEBI:33019"/>
        <dbReference type="ChEBI" id="CHEBI:57926"/>
        <dbReference type="ChEBI" id="CHEBI:73682"/>
        <dbReference type="EC" id="2.7.7.87"/>
    </reaction>
</comment>
<comment type="subcellular location">
    <subcellularLocation>
        <location evidence="1">Cytoplasm</location>
    </subcellularLocation>
</comment>
<comment type="similarity">
    <text evidence="1">Belongs to the SUA5 family. TsaC subfamily.</text>
</comment>
<name>TSAC_ACIBT</name>
<feature type="chain" id="PRO_0000352887" description="Threonylcarbamoyl-AMP synthase">
    <location>
        <begin position="1"/>
        <end position="189"/>
    </location>
</feature>
<feature type="domain" description="YrdC-like" evidence="1">
    <location>
        <begin position="3"/>
        <end position="189"/>
    </location>
</feature>
<organism>
    <name type="scientific">Acinetobacter baumannii (strain ATCC 17978 / DSM 105126 / CIP 53.77 / LMG 1025 / NCDC KC755 / 5377)</name>
    <dbReference type="NCBI Taxonomy" id="400667"/>
    <lineage>
        <taxon>Bacteria</taxon>
        <taxon>Pseudomonadati</taxon>
        <taxon>Pseudomonadota</taxon>
        <taxon>Gammaproteobacteria</taxon>
        <taxon>Moraxellales</taxon>
        <taxon>Moraxellaceae</taxon>
        <taxon>Acinetobacter</taxon>
        <taxon>Acinetobacter calcoaceticus/baumannii complex</taxon>
    </lineage>
</organism>
<gene>
    <name evidence="1" type="primary">tsaC</name>
    <name type="synonym">rimN</name>
    <name type="ordered locus">A1S_0165</name>
</gene>
<reference key="1">
    <citation type="journal article" date="2007" name="Genes Dev.">
        <title>New insights into Acinetobacter baumannii pathogenesis revealed by high-density pyrosequencing and transposon mutagenesis.</title>
        <authorList>
            <person name="Smith M.G."/>
            <person name="Gianoulis T.A."/>
            <person name="Pukatzki S."/>
            <person name="Mekalanos J.J."/>
            <person name="Ornston L.N."/>
            <person name="Gerstein M."/>
            <person name="Snyder M."/>
        </authorList>
    </citation>
    <scope>NUCLEOTIDE SEQUENCE [LARGE SCALE GENOMIC DNA]</scope>
    <source>
        <strain>ATCC 17978 / DSM 105126 / CIP 53.77 / LMG 1025 / NCDC KC755 / 5377</strain>
    </source>
</reference>
<keyword id="KW-0067">ATP-binding</keyword>
<keyword id="KW-0963">Cytoplasm</keyword>
<keyword id="KW-0547">Nucleotide-binding</keyword>
<keyword id="KW-0548">Nucleotidyltransferase</keyword>
<keyword id="KW-0808">Transferase</keyword>
<keyword id="KW-0819">tRNA processing</keyword>
<evidence type="ECO:0000255" key="1">
    <source>
        <dbReference type="HAMAP-Rule" id="MF_01852"/>
    </source>
</evidence>
<protein>
    <recommendedName>
        <fullName evidence="1">Threonylcarbamoyl-AMP synthase</fullName>
        <shortName evidence="1">TC-AMP synthase</shortName>
        <ecNumber evidence="1">2.7.7.87</ecNumber>
    </recommendedName>
    <alternativeName>
        <fullName evidence="1">L-threonylcarbamoyladenylate synthase</fullName>
    </alternativeName>
    <alternativeName>
        <fullName evidence="1">t(6)A37 threonylcarbamoyladenosine biosynthesis protein TsaC</fullName>
    </alternativeName>
    <alternativeName>
        <fullName evidence="1">tRNA threonylcarbamoyladenosine biosynthesis protein TsaC</fullName>
    </alternativeName>
</protein>
<proteinExistence type="inferred from homology"/>
<sequence>MITTSVTEAAECLQQGQVLAYPTEAVWGLGCDPFNEQAFQKILELKQRPIEKGVILLAGHISQVEHLLTSLPQTTQQEIIDCWTNHQPSERATTWLLPADQHIPSWIKGEHPLVAVRVTTHPLCVALCNAFHGFIVSTSANPSGQEPAHSLQDACQYFGSQLNYLNGDLGQSQQPSRIINALTGEVIRP</sequence>
<accession>A3M154</accession>
<dbReference type="EC" id="2.7.7.87" evidence="1"/>
<dbReference type="EMBL" id="CP000521">
    <property type="protein sequence ID" value="ABO10648.2"/>
    <property type="molecule type" value="Genomic_DNA"/>
</dbReference>
<dbReference type="RefSeq" id="WP_000633612.1">
    <property type="nucleotide sequence ID" value="NZ_CP053098.1"/>
</dbReference>
<dbReference type="SMR" id="A3M154"/>
<dbReference type="KEGG" id="acb:A1S_0165"/>
<dbReference type="HOGENOM" id="CLU_031397_6_0_6"/>
<dbReference type="GO" id="GO:0005737">
    <property type="term" value="C:cytoplasm"/>
    <property type="evidence" value="ECO:0007669"/>
    <property type="project" value="UniProtKB-SubCell"/>
</dbReference>
<dbReference type="GO" id="GO:0005524">
    <property type="term" value="F:ATP binding"/>
    <property type="evidence" value="ECO:0007669"/>
    <property type="project" value="UniProtKB-UniRule"/>
</dbReference>
<dbReference type="GO" id="GO:0003725">
    <property type="term" value="F:double-stranded RNA binding"/>
    <property type="evidence" value="ECO:0007669"/>
    <property type="project" value="InterPro"/>
</dbReference>
<dbReference type="GO" id="GO:0061710">
    <property type="term" value="F:L-threonylcarbamoyladenylate synthase"/>
    <property type="evidence" value="ECO:0007669"/>
    <property type="project" value="UniProtKB-EC"/>
</dbReference>
<dbReference type="GO" id="GO:0000049">
    <property type="term" value="F:tRNA binding"/>
    <property type="evidence" value="ECO:0007669"/>
    <property type="project" value="TreeGrafter"/>
</dbReference>
<dbReference type="GO" id="GO:0006450">
    <property type="term" value="P:regulation of translational fidelity"/>
    <property type="evidence" value="ECO:0007669"/>
    <property type="project" value="TreeGrafter"/>
</dbReference>
<dbReference type="GO" id="GO:0002949">
    <property type="term" value="P:tRNA threonylcarbamoyladenosine modification"/>
    <property type="evidence" value="ECO:0007669"/>
    <property type="project" value="UniProtKB-UniRule"/>
</dbReference>
<dbReference type="Gene3D" id="3.90.870.10">
    <property type="entry name" value="DHBP synthase"/>
    <property type="match status" value="1"/>
</dbReference>
<dbReference type="HAMAP" id="MF_01852">
    <property type="entry name" value="TsaC"/>
    <property type="match status" value="1"/>
</dbReference>
<dbReference type="InterPro" id="IPR017945">
    <property type="entry name" value="DHBP_synth_RibB-like_a/b_dom"/>
</dbReference>
<dbReference type="InterPro" id="IPR006070">
    <property type="entry name" value="Sua5-like_dom"/>
</dbReference>
<dbReference type="InterPro" id="IPR023535">
    <property type="entry name" value="TC-AMP_synthase"/>
</dbReference>
<dbReference type="InterPro" id="IPR050156">
    <property type="entry name" value="TC-AMP_synthase_SUA5"/>
</dbReference>
<dbReference type="PANTHER" id="PTHR17490">
    <property type="entry name" value="SUA5"/>
    <property type="match status" value="1"/>
</dbReference>
<dbReference type="PANTHER" id="PTHR17490:SF18">
    <property type="entry name" value="THREONYLCARBAMOYL-AMP SYNTHASE"/>
    <property type="match status" value="1"/>
</dbReference>
<dbReference type="Pfam" id="PF01300">
    <property type="entry name" value="Sua5_yciO_yrdC"/>
    <property type="match status" value="1"/>
</dbReference>
<dbReference type="SUPFAM" id="SSF55821">
    <property type="entry name" value="YrdC/RibB"/>
    <property type="match status" value="1"/>
</dbReference>
<dbReference type="PROSITE" id="PS51163">
    <property type="entry name" value="YRDC"/>
    <property type="match status" value="1"/>
</dbReference>